<gene>
    <name evidence="1" type="primary">truB</name>
    <name type="ordered locus">WIGBR2240</name>
</gene>
<evidence type="ECO:0000255" key="1">
    <source>
        <dbReference type="HAMAP-Rule" id="MF_01080"/>
    </source>
</evidence>
<reference key="1">
    <citation type="journal article" date="2002" name="Nat. Genet.">
        <title>Genome sequence of the endocellular obligate symbiont of tsetse flies, Wigglesworthia glossinidia.</title>
        <authorList>
            <person name="Akman L."/>
            <person name="Yamashita A."/>
            <person name="Watanabe H."/>
            <person name="Oshima K."/>
            <person name="Shiba T."/>
            <person name="Hattori M."/>
            <person name="Aksoy S."/>
        </authorList>
    </citation>
    <scope>NUCLEOTIDE SEQUENCE [LARGE SCALE GENOMIC DNA]</scope>
</reference>
<protein>
    <recommendedName>
        <fullName evidence="1">tRNA pseudouridine synthase B</fullName>
        <ecNumber evidence="1">5.4.99.25</ecNumber>
    </recommendedName>
    <alternativeName>
        <fullName evidence="1">tRNA pseudouridine(55) synthase</fullName>
        <shortName evidence="1">Psi55 synthase</shortName>
    </alternativeName>
    <alternativeName>
        <fullName evidence="1">tRNA pseudouridylate synthase</fullName>
    </alternativeName>
    <alternativeName>
        <fullName evidence="1">tRNA-uridine isomerase</fullName>
    </alternativeName>
</protein>
<accession>Q8D2X8</accession>
<organism>
    <name type="scientific">Wigglesworthia glossinidia brevipalpis</name>
    <dbReference type="NCBI Taxonomy" id="36870"/>
    <lineage>
        <taxon>Bacteria</taxon>
        <taxon>Pseudomonadati</taxon>
        <taxon>Pseudomonadota</taxon>
        <taxon>Gammaproteobacteria</taxon>
        <taxon>Enterobacterales</taxon>
        <taxon>Erwiniaceae</taxon>
        <taxon>Wigglesworthia</taxon>
    </lineage>
</organism>
<dbReference type="EC" id="5.4.99.25" evidence="1"/>
<dbReference type="EMBL" id="BA000021">
    <property type="protein sequence ID" value="BAC24370.1"/>
    <property type="molecule type" value="Genomic_DNA"/>
</dbReference>
<dbReference type="SMR" id="Q8D2X8"/>
<dbReference type="STRING" id="36870.gene:10368712"/>
<dbReference type="KEGG" id="wbr:truB"/>
<dbReference type="eggNOG" id="COG0130">
    <property type="taxonomic scope" value="Bacteria"/>
</dbReference>
<dbReference type="HOGENOM" id="CLU_032087_0_3_6"/>
<dbReference type="OrthoDB" id="9802309at2"/>
<dbReference type="Proteomes" id="UP000000562">
    <property type="component" value="Chromosome"/>
</dbReference>
<dbReference type="GO" id="GO:0003723">
    <property type="term" value="F:RNA binding"/>
    <property type="evidence" value="ECO:0007669"/>
    <property type="project" value="InterPro"/>
</dbReference>
<dbReference type="GO" id="GO:0160148">
    <property type="term" value="F:tRNA pseudouridine(55) synthase activity"/>
    <property type="evidence" value="ECO:0007669"/>
    <property type="project" value="UniProtKB-EC"/>
</dbReference>
<dbReference type="GO" id="GO:1990481">
    <property type="term" value="P:mRNA pseudouridine synthesis"/>
    <property type="evidence" value="ECO:0007669"/>
    <property type="project" value="TreeGrafter"/>
</dbReference>
<dbReference type="GO" id="GO:0031119">
    <property type="term" value="P:tRNA pseudouridine synthesis"/>
    <property type="evidence" value="ECO:0007669"/>
    <property type="project" value="UniProtKB-UniRule"/>
</dbReference>
<dbReference type="CDD" id="cd02573">
    <property type="entry name" value="PseudoU_synth_EcTruB"/>
    <property type="match status" value="1"/>
</dbReference>
<dbReference type="Gene3D" id="3.30.2350.10">
    <property type="entry name" value="Pseudouridine synthase"/>
    <property type="match status" value="1"/>
</dbReference>
<dbReference type="HAMAP" id="MF_01080">
    <property type="entry name" value="TruB_bact"/>
    <property type="match status" value="1"/>
</dbReference>
<dbReference type="InterPro" id="IPR020103">
    <property type="entry name" value="PsdUridine_synth_cat_dom_sf"/>
</dbReference>
<dbReference type="InterPro" id="IPR002501">
    <property type="entry name" value="PsdUridine_synth_N"/>
</dbReference>
<dbReference type="InterPro" id="IPR014780">
    <property type="entry name" value="tRNA_psdUridine_synth_TruB"/>
</dbReference>
<dbReference type="InterPro" id="IPR032819">
    <property type="entry name" value="TruB_C"/>
</dbReference>
<dbReference type="NCBIfam" id="TIGR00431">
    <property type="entry name" value="TruB"/>
    <property type="match status" value="1"/>
</dbReference>
<dbReference type="PANTHER" id="PTHR13767:SF2">
    <property type="entry name" value="PSEUDOURIDYLATE SYNTHASE TRUB1"/>
    <property type="match status" value="1"/>
</dbReference>
<dbReference type="PANTHER" id="PTHR13767">
    <property type="entry name" value="TRNA-PSEUDOURIDINE SYNTHASE"/>
    <property type="match status" value="1"/>
</dbReference>
<dbReference type="Pfam" id="PF16198">
    <property type="entry name" value="TruB_C_2"/>
    <property type="match status" value="1"/>
</dbReference>
<dbReference type="Pfam" id="PF01509">
    <property type="entry name" value="TruB_N"/>
    <property type="match status" value="1"/>
</dbReference>
<dbReference type="SUPFAM" id="SSF55120">
    <property type="entry name" value="Pseudouridine synthase"/>
    <property type="match status" value="1"/>
</dbReference>
<keyword id="KW-0413">Isomerase</keyword>
<keyword id="KW-1185">Reference proteome</keyword>
<keyword id="KW-0819">tRNA processing</keyword>
<feature type="chain" id="PRO_0000121943" description="tRNA pseudouridine synthase B">
    <location>
        <begin position="1"/>
        <end position="327"/>
    </location>
</feature>
<feature type="active site" description="Nucleophile" evidence="1">
    <location>
        <position position="69"/>
    </location>
</feature>
<feature type="binding site" evidence="1">
    <location>
        <position position="97"/>
    </location>
    <ligand>
        <name>substrate</name>
    </ligand>
</feature>
<feature type="binding site" evidence="1">
    <location>
        <position position="201"/>
    </location>
    <ligand>
        <name>substrate</name>
    </ligand>
</feature>
<feature type="binding site" evidence="1">
    <location>
        <position position="222"/>
    </location>
    <ligand>
        <name>substrate</name>
    </ligand>
</feature>
<sequence>MIYLIIILLKFQKNLYDLLYSVIIKEDYLRNINGILLLDKPIGLSSNLILQKIKKLFKAKKAGYIGTLDPIASGMLPIFFGDATKFSDYLLNTNKWYKIKAKLGEKTNTLDSFGKIICIRPILNIKKLNIEKILSEFQGEIYQKPPMFSSLKHLGKPLYKYARQGIYIPREKRKVYVHYIKLLSFSKKYFSLTIKCSKGTYVRSIVDDIGEKLFCGAHIVKLRRTKLFNYKESHMIDSNKLYNIKKKFNDLKKLDECLLPIESIFKKLPIIVVNDDIINRLRNGIKLNFWKIKKNNLFKIISKDTKKFVGIIDINKYGRANSIKLIK</sequence>
<proteinExistence type="inferred from homology"/>
<comment type="function">
    <text evidence="1">Responsible for synthesis of pseudouridine from uracil-55 in the psi GC loop of transfer RNAs.</text>
</comment>
<comment type="catalytic activity">
    <reaction evidence="1">
        <text>uridine(55) in tRNA = pseudouridine(55) in tRNA</text>
        <dbReference type="Rhea" id="RHEA:42532"/>
        <dbReference type="Rhea" id="RHEA-COMP:10101"/>
        <dbReference type="Rhea" id="RHEA-COMP:10102"/>
        <dbReference type="ChEBI" id="CHEBI:65314"/>
        <dbReference type="ChEBI" id="CHEBI:65315"/>
        <dbReference type="EC" id="5.4.99.25"/>
    </reaction>
</comment>
<comment type="similarity">
    <text evidence="1">Belongs to the pseudouridine synthase TruB family. Type 1 subfamily.</text>
</comment>
<name>TRUB_WIGBR</name>